<name>HIS4_PYRFU</name>
<organism>
    <name type="scientific">Pyrococcus furiosus (strain ATCC 43587 / DSM 3638 / JCM 8422 / Vc1)</name>
    <dbReference type="NCBI Taxonomy" id="186497"/>
    <lineage>
        <taxon>Archaea</taxon>
        <taxon>Methanobacteriati</taxon>
        <taxon>Methanobacteriota</taxon>
        <taxon>Thermococci</taxon>
        <taxon>Thermococcales</taxon>
        <taxon>Thermococcaceae</taxon>
        <taxon>Pyrococcus</taxon>
    </lineage>
</organism>
<keyword id="KW-0028">Amino-acid biosynthesis</keyword>
<keyword id="KW-0963">Cytoplasm</keyword>
<keyword id="KW-0368">Histidine biosynthesis</keyword>
<keyword id="KW-0413">Isomerase</keyword>
<keyword id="KW-1185">Reference proteome</keyword>
<feature type="chain" id="PRO_0000142101" description="1-(5-phosphoribosyl)-5-[(5-phosphoribosylamino)methylideneamino] imidazole-4-carboxamide isomerase">
    <location>
        <begin position="1"/>
        <end position="240"/>
    </location>
</feature>
<feature type="active site" description="Proton acceptor" evidence="1">
    <location>
        <position position="10"/>
    </location>
</feature>
<feature type="active site" description="Proton donor" evidence="1">
    <location>
        <position position="127"/>
    </location>
</feature>
<evidence type="ECO:0000250" key="1"/>
<evidence type="ECO:0000305" key="2"/>
<protein>
    <recommendedName>
        <fullName>1-(5-phosphoribosyl)-5-[(5-phosphoribosylamino)methylideneamino] imidazole-4-carboxamide isomerase</fullName>
        <ecNumber>5.3.1.16</ecNumber>
    </recommendedName>
    <alternativeName>
        <fullName>Phosphoribosylformimino-5-aminoimidazole carboxamide ribotide isomerase</fullName>
    </alternativeName>
</protein>
<reference key="1">
    <citation type="journal article" date="1999" name="Genetics">
        <title>Divergence of the hyperthermophilic archaea Pyrococcus furiosus and P. horikoshii inferred from complete genomic sequences.</title>
        <authorList>
            <person name="Maeder D.L."/>
            <person name="Weiss R.B."/>
            <person name="Dunn D.M."/>
            <person name="Cherry J.L."/>
            <person name="Gonzalez J.M."/>
            <person name="DiRuggiero J."/>
            <person name="Robb F.T."/>
        </authorList>
    </citation>
    <scope>NUCLEOTIDE SEQUENCE [LARGE SCALE GENOMIC DNA]</scope>
    <source>
        <strain>ATCC 43587 / DSM 3638 / JCM 8422 / Vc1</strain>
    </source>
</reference>
<comment type="catalytic activity">
    <reaction>
        <text>1-(5-phospho-beta-D-ribosyl)-5-[(5-phospho-beta-D-ribosylamino)methylideneamino]imidazole-4-carboxamide = 5-[(5-phospho-1-deoxy-D-ribulos-1-ylimino)methylamino]-1-(5-phospho-beta-D-ribosyl)imidazole-4-carboxamide</text>
        <dbReference type="Rhea" id="RHEA:15469"/>
        <dbReference type="ChEBI" id="CHEBI:58435"/>
        <dbReference type="ChEBI" id="CHEBI:58525"/>
        <dbReference type="EC" id="5.3.1.16"/>
    </reaction>
</comment>
<comment type="pathway">
    <text>Amino-acid biosynthesis; L-histidine biosynthesis; L-histidine from 5-phospho-alpha-D-ribose 1-diphosphate: step 4/9.</text>
</comment>
<comment type="subcellular location">
    <subcellularLocation>
        <location evidence="1">Cytoplasm</location>
    </subcellularLocation>
</comment>
<comment type="similarity">
    <text evidence="2">Belongs to the HisA/HisF family.</text>
</comment>
<sequence>MKFRIYPAIDIMDGKVVRLYKGKKDEVKVYGDPLKFAEKFSEYVDKIHIVDLDGAFSGKPQNLDIVEKIIRDVGVRVQIGGGFRDYESIKKAYDIGVENVIIGTKALDISFLERITSEFEGITVSLDSKGGKIFTKGWIEEESLLVEDAYKMLRKFVNRFVYTVIDRDGTLLGIEKIKRFWGDEEFIYAGGVATPTDIIQLAEIGFSGVIIGKALYEGTISLEEALEVAKSVGKKNYSSS</sequence>
<dbReference type="EC" id="5.3.1.16"/>
<dbReference type="EMBL" id="AE009950">
    <property type="protein sequence ID" value="AAL81786.1"/>
    <property type="molecule type" value="Genomic_DNA"/>
</dbReference>
<dbReference type="RefSeq" id="WP_011012808.1">
    <property type="nucleotide sequence ID" value="NZ_CP023154.1"/>
</dbReference>
<dbReference type="SMR" id="P58791"/>
<dbReference type="STRING" id="186497.PF1662"/>
<dbReference type="PaxDb" id="186497-PF1662"/>
<dbReference type="GeneID" id="41713490"/>
<dbReference type="KEGG" id="pfu:PF1662"/>
<dbReference type="PATRIC" id="fig|186497.12.peg.1728"/>
<dbReference type="eggNOG" id="arCOG00618">
    <property type="taxonomic scope" value="Archaea"/>
</dbReference>
<dbReference type="HOGENOM" id="CLU_048577_1_2_2"/>
<dbReference type="OrthoDB" id="52866at2157"/>
<dbReference type="PhylomeDB" id="P58791"/>
<dbReference type="UniPathway" id="UPA00031">
    <property type="reaction ID" value="UER00009"/>
</dbReference>
<dbReference type="Proteomes" id="UP000001013">
    <property type="component" value="Chromosome"/>
</dbReference>
<dbReference type="GO" id="GO:0005737">
    <property type="term" value="C:cytoplasm"/>
    <property type="evidence" value="ECO:0007669"/>
    <property type="project" value="UniProtKB-SubCell"/>
</dbReference>
<dbReference type="GO" id="GO:0003949">
    <property type="term" value="F:1-(5-phosphoribosyl)-5-[(5-phosphoribosylamino)methylideneamino]imidazole-4-carboxamide isomerase activity"/>
    <property type="evidence" value="ECO:0007669"/>
    <property type="project" value="UniProtKB-UniRule"/>
</dbReference>
<dbReference type="GO" id="GO:0000105">
    <property type="term" value="P:L-histidine biosynthetic process"/>
    <property type="evidence" value="ECO:0007669"/>
    <property type="project" value="UniProtKB-UniRule"/>
</dbReference>
<dbReference type="GO" id="GO:0000162">
    <property type="term" value="P:L-tryptophan biosynthetic process"/>
    <property type="evidence" value="ECO:0007669"/>
    <property type="project" value="TreeGrafter"/>
</dbReference>
<dbReference type="CDD" id="cd04732">
    <property type="entry name" value="HisA"/>
    <property type="match status" value="1"/>
</dbReference>
<dbReference type="FunFam" id="3.20.20.70:FF:000009">
    <property type="entry name" value="1-(5-phosphoribosyl)-5-[(5-phosphoribosylamino)methylideneamino] imidazole-4-carboxamide isomerase"/>
    <property type="match status" value="1"/>
</dbReference>
<dbReference type="Gene3D" id="3.20.20.70">
    <property type="entry name" value="Aldolase class I"/>
    <property type="match status" value="1"/>
</dbReference>
<dbReference type="HAMAP" id="MF_01014">
    <property type="entry name" value="HisA"/>
    <property type="match status" value="1"/>
</dbReference>
<dbReference type="InterPro" id="IPR013785">
    <property type="entry name" value="Aldolase_TIM"/>
</dbReference>
<dbReference type="InterPro" id="IPR006062">
    <property type="entry name" value="His_biosynth"/>
</dbReference>
<dbReference type="InterPro" id="IPR006063">
    <property type="entry name" value="HisA_bact_arch"/>
</dbReference>
<dbReference type="InterPro" id="IPR044524">
    <property type="entry name" value="Isoase_HisA-like"/>
</dbReference>
<dbReference type="InterPro" id="IPR023016">
    <property type="entry name" value="Isoase_HisA-like_bact"/>
</dbReference>
<dbReference type="InterPro" id="IPR011060">
    <property type="entry name" value="RibuloseP-bd_barrel"/>
</dbReference>
<dbReference type="NCBIfam" id="TIGR00007">
    <property type="entry name" value="1-(5-phosphoribosyl)-5-[(5-phosphoribosylamino)methylideneamino]imidazole-4-carboxamide isomerase"/>
    <property type="match status" value="1"/>
</dbReference>
<dbReference type="NCBIfam" id="NF003156">
    <property type="entry name" value="PRK04128.1"/>
    <property type="match status" value="1"/>
</dbReference>
<dbReference type="PANTHER" id="PTHR43090">
    <property type="entry name" value="1-(5-PHOSPHORIBOSYL)-5-[(5-PHOSPHORIBOSYLAMINO)METHYLIDENEAMINO] IMIDAZOLE-4-CARBOXAMIDE ISOMERASE"/>
    <property type="match status" value="1"/>
</dbReference>
<dbReference type="PANTHER" id="PTHR43090:SF7">
    <property type="entry name" value="1-(5-PHOSPHORIBOSYL)-5-[(5-PHOSPHORIBOSYLAMINO)METHYLIDENEAMINO] IMIDAZOLE-4-CARBOXAMIDE ISOMERASE"/>
    <property type="match status" value="1"/>
</dbReference>
<dbReference type="Pfam" id="PF00977">
    <property type="entry name" value="His_biosynth"/>
    <property type="match status" value="1"/>
</dbReference>
<dbReference type="SUPFAM" id="SSF51366">
    <property type="entry name" value="Ribulose-phoshate binding barrel"/>
    <property type="match status" value="1"/>
</dbReference>
<accession>P58791</accession>
<gene>
    <name type="primary">hisA</name>
    <name type="ordered locus">PF1662</name>
</gene>
<proteinExistence type="inferred from homology"/>